<dbReference type="EMBL" id="CP001138">
    <property type="protein sequence ID" value="ACH52719.1"/>
    <property type="molecule type" value="Genomic_DNA"/>
</dbReference>
<dbReference type="RefSeq" id="WP_000092487.1">
    <property type="nucleotide sequence ID" value="NC_011149.1"/>
</dbReference>
<dbReference type="SMR" id="B5F6H7"/>
<dbReference type="KEGG" id="sea:SeAg_B1704"/>
<dbReference type="HOGENOM" id="CLU_078181_0_0_6"/>
<dbReference type="Proteomes" id="UP000008819">
    <property type="component" value="Chromosome"/>
</dbReference>
<dbReference type="GO" id="GO:0005737">
    <property type="term" value="C:cytoplasm"/>
    <property type="evidence" value="ECO:0007669"/>
    <property type="project" value="UniProtKB-SubCell"/>
</dbReference>
<dbReference type="GO" id="GO:0003677">
    <property type="term" value="F:DNA binding"/>
    <property type="evidence" value="ECO:0007669"/>
    <property type="project" value="UniProtKB-UniRule"/>
</dbReference>
<dbReference type="GO" id="GO:0006274">
    <property type="term" value="P:DNA replication termination"/>
    <property type="evidence" value="ECO:0007669"/>
    <property type="project" value="UniProtKB-UniRule"/>
</dbReference>
<dbReference type="Gene3D" id="3.30.54.10">
    <property type="match status" value="1"/>
</dbReference>
<dbReference type="Gene3D" id="3.50.14.10">
    <property type="entry name" value="Replication terminator Tus, domain 1 superfamily/Replication terminator Tus"/>
    <property type="match status" value="1"/>
</dbReference>
<dbReference type="HAMAP" id="MF_00483">
    <property type="entry name" value="Rep_term_Tus"/>
    <property type="match status" value="1"/>
</dbReference>
<dbReference type="InterPro" id="IPR008865">
    <property type="entry name" value="DNA_replication_term_site-bd"/>
</dbReference>
<dbReference type="InterPro" id="IPR036381">
    <property type="entry name" value="Tus_dom1"/>
</dbReference>
<dbReference type="InterPro" id="IPR036384">
    <property type="entry name" value="Tus_sf"/>
</dbReference>
<dbReference type="NCBIfam" id="TIGR02648">
    <property type="entry name" value="rep_term_tus"/>
    <property type="match status" value="1"/>
</dbReference>
<dbReference type="Pfam" id="PF05472">
    <property type="entry name" value="Ter"/>
    <property type="match status" value="1"/>
</dbReference>
<dbReference type="SUPFAM" id="SSF56596">
    <property type="entry name" value="Replication terminator protein (Tus)"/>
    <property type="match status" value="1"/>
</dbReference>
<sequence length="309" mass="35483">MSRYDLVERLNGTFRQIEQHLAALTDNLQQHSLLIARVFSLPQVTKEAEHAPLDTIEVTQHLGKEAEALALRHYRHLFIQQQSENRSSKAAVRLPGVLCYQVDNAIQLDLENQIQRINQLKTTFEQMVTVESGLPSAARFEWVHRHLPGLITLNAYRTLTLINNPATIRFGWANKHIIKNLSRDEVLSQLKKSLASPRSVPPWTREQWQFKLEREYQDIAALPQQARLKIKRPVKVQPIARIWYKGQQKQVQHACPTPIIALINTDNGAGVPDIGGLENYDADNIQHRFKPQAQPLRLIIPRLHLYVAD</sequence>
<reference key="1">
    <citation type="journal article" date="2011" name="J. Bacteriol.">
        <title>Comparative genomics of 28 Salmonella enterica isolates: evidence for CRISPR-mediated adaptive sublineage evolution.</title>
        <authorList>
            <person name="Fricke W.F."/>
            <person name="Mammel M.K."/>
            <person name="McDermott P.F."/>
            <person name="Tartera C."/>
            <person name="White D.G."/>
            <person name="Leclerc J.E."/>
            <person name="Ravel J."/>
            <person name="Cebula T.A."/>
        </authorList>
    </citation>
    <scope>NUCLEOTIDE SEQUENCE [LARGE SCALE GENOMIC DNA]</scope>
    <source>
        <strain>SL483</strain>
    </source>
</reference>
<accession>B5F6H7</accession>
<keyword id="KW-0963">Cytoplasm</keyword>
<keyword id="KW-0235">DNA replication</keyword>
<keyword id="KW-0238">DNA-binding</keyword>
<protein>
    <recommendedName>
        <fullName evidence="1">DNA replication terminus site-binding protein</fullName>
        <shortName evidence="1">Ter-binding protein</shortName>
    </recommendedName>
</protein>
<organism>
    <name type="scientific">Salmonella agona (strain SL483)</name>
    <dbReference type="NCBI Taxonomy" id="454166"/>
    <lineage>
        <taxon>Bacteria</taxon>
        <taxon>Pseudomonadati</taxon>
        <taxon>Pseudomonadota</taxon>
        <taxon>Gammaproteobacteria</taxon>
        <taxon>Enterobacterales</taxon>
        <taxon>Enterobacteriaceae</taxon>
        <taxon>Salmonella</taxon>
    </lineage>
</organism>
<comment type="function">
    <text evidence="1">Trans-acting protein required for termination of DNA replication. Binds to DNA replication terminator sequences (terA to terF) to prevent the passage of replication forks. The termination efficiency will be affected by the affinity of this protein for the terminator sequence.</text>
</comment>
<comment type="subcellular location">
    <subcellularLocation>
        <location evidence="1">Cytoplasm</location>
    </subcellularLocation>
</comment>
<comment type="similarity">
    <text evidence="1">Belongs to the Tus family.</text>
</comment>
<proteinExistence type="inferred from homology"/>
<gene>
    <name evidence="1" type="primary">tus</name>
    <name type="ordered locus">SeAg_B1704</name>
</gene>
<evidence type="ECO:0000255" key="1">
    <source>
        <dbReference type="HAMAP-Rule" id="MF_00483"/>
    </source>
</evidence>
<feature type="chain" id="PRO_1000126042" description="DNA replication terminus site-binding protein">
    <location>
        <begin position="1"/>
        <end position="309"/>
    </location>
</feature>
<name>TUS_SALA4</name>